<evidence type="ECO:0000255" key="1">
    <source>
        <dbReference type="HAMAP-Rule" id="MF_00220"/>
    </source>
</evidence>
<name>PYRC_DEIRA</name>
<sequence>MTITITNIKRVGSEQTESLTIENGLIKGWNLPAEGEIFDGQGGTLAPALIELHAHLREPGQTEKEDLASGLAAASAGGYGTVVCMPNTRPVIDDPALVRSLIEKARGLGFARLRPAAAVTKGEKGEQLTEMSYLKEAGAVMFTDDGLTNENARVLRLGMEYAKSLGMVISVHAEDDALRAGGVMNEGPVSESLGLPGNPAAAAAARVARDMEIVALTGARLHVQHLSTARELDIVRDAKRRGLPVTCEVCPHHLDLTDESLRTFDAMYKVAPPLRTRADADYLLEGLLDGSVDCIATDHAPHTRAEKERDLLDAPSGIAYIEIAFPIMWTRFGERLGLEKLIDLMTAGPARVMGWPEPSLEAGAPADMVVLDLETEREVNPAEFKSKAKFTPWQGQKLRGFPLLTVVDGKVAYRRE</sequence>
<protein>
    <recommendedName>
        <fullName evidence="1">Dihydroorotase</fullName>
        <shortName evidence="1">DHOase</shortName>
        <ecNumber evidence="1">3.5.2.3</ecNumber>
    </recommendedName>
</protein>
<dbReference type="EC" id="3.5.2.3" evidence="1"/>
<dbReference type="EMBL" id="AE000513">
    <property type="protein sequence ID" value="AAF10679.1"/>
    <property type="molecule type" value="Genomic_DNA"/>
</dbReference>
<dbReference type="PIR" id="E75437">
    <property type="entry name" value="E75437"/>
</dbReference>
<dbReference type="RefSeq" id="NP_294830.1">
    <property type="nucleotide sequence ID" value="NC_001263.1"/>
</dbReference>
<dbReference type="RefSeq" id="WP_010887749.1">
    <property type="nucleotide sequence ID" value="NC_001263.1"/>
</dbReference>
<dbReference type="SMR" id="Q9RVC3"/>
<dbReference type="FunCoup" id="Q9RVC3">
    <property type="interactions" value="274"/>
</dbReference>
<dbReference type="STRING" id="243230.DR_1106"/>
<dbReference type="PaxDb" id="243230-DR_1106"/>
<dbReference type="EnsemblBacteria" id="AAF10679">
    <property type="protein sequence ID" value="AAF10679"/>
    <property type="gene ID" value="DR_1106"/>
</dbReference>
<dbReference type="GeneID" id="69517352"/>
<dbReference type="KEGG" id="dra:DR_1106"/>
<dbReference type="PATRIC" id="fig|243230.17.peg.1302"/>
<dbReference type="eggNOG" id="COG0044">
    <property type="taxonomic scope" value="Bacteria"/>
</dbReference>
<dbReference type="HOGENOM" id="CLU_015572_1_0_0"/>
<dbReference type="InParanoid" id="Q9RVC3"/>
<dbReference type="OrthoDB" id="9765462at2"/>
<dbReference type="UniPathway" id="UPA00070">
    <property type="reaction ID" value="UER00117"/>
</dbReference>
<dbReference type="Proteomes" id="UP000002524">
    <property type="component" value="Chromosome 1"/>
</dbReference>
<dbReference type="GO" id="GO:0005737">
    <property type="term" value="C:cytoplasm"/>
    <property type="evidence" value="ECO:0000318"/>
    <property type="project" value="GO_Central"/>
</dbReference>
<dbReference type="GO" id="GO:0004038">
    <property type="term" value="F:allantoinase activity"/>
    <property type="evidence" value="ECO:0000318"/>
    <property type="project" value="GO_Central"/>
</dbReference>
<dbReference type="GO" id="GO:0004151">
    <property type="term" value="F:dihydroorotase activity"/>
    <property type="evidence" value="ECO:0007669"/>
    <property type="project" value="UniProtKB-UniRule"/>
</dbReference>
<dbReference type="GO" id="GO:0008270">
    <property type="term" value="F:zinc ion binding"/>
    <property type="evidence" value="ECO:0007669"/>
    <property type="project" value="UniProtKB-UniRule"/>
</dbReference>
<dbReference type="GO" id="GO:0044205">
    <property type="term" value="P:'de novo' UMP biosynthetic process"/>
    <property type="evidence" value="ECO:0007669"/>
    <property type="project" value="UniProtKB-UniRule"/>
</dbReference>
<dbReference type="GO" id="GO:0006145">
    <property type="term" value="P:purine nucleobase catabolic process"/>
    <property type="evidence" value="ECO:0000318"/>
    <property type="project" value="GO_Central"/>
</dbReference>
<dbReference type="CDD" id="cd01317">
    <property type="entry name" value="DHOase_IIa"/>
    <property type="match status" value="1"/>
</dbReference>
<dbReference type="Gene3D" id="3.20.20.140">
    <property type="entry name" value="Metal-dependent hydrolases"/>
    <property type="match status" value="1"/>
</dbReference>
<dbReference type="Gene3D" id="2.30.40.10">
    <property type="entry name" value="Urease, subunit C, domain 1"/>
    <property type="match status" value="1"/>
</dbReference>
<dbReference type="HAMAP" id="MF_00220_B">
    <property type="entry name" value="PyrC_classI_B"/>
    <property type="match status" value="1"/>
</dbReference>
<dbReference type="InterPro" id="IPR006680">
    <property type="entry name" value="Amidohydro-rel"/>
</dbReference>
<dbReference type="InterPro" id="IPR004722">
    <property type="entry name" value="DHOase"/>
</dbReference>
<dbReference type="InterPro" id="IPR050138">
    <property type="entry name" value="DHOase/Allantoinase_Hydrolase"/>
</dbReference>
<dbReference type="InterPro" id="IPR002195">
    <property type="entry name" value="Dihydroorotase_CS"/>
</dbReference>
<dbReference type="InterPro" id="IPR011059">
    <property type="entry name" value="Metal-dep_hydrolase_composite"/>
</dbReference>
<dbReference type="InterPro" id="IPR032466">
    <property type="entry name" value="Metal_Hydrolase"/>
</dbReference>
<dbReference type="NCBIfam" id="NF006841">
    <property type="entry name" value="PRK09357.2-2"/>
    <property type="match status" value="1"/>
</dbReference>
<dbReference type="NCBIfam" id="TIGR00857">
    <property type="entry name" value="pyrC_multi"/>
    <property type="match status" value="1"/>
</dbReference>
<dbReference type="PANTHER" id="PTHR43668">
    <property type="entry name" value="ALLANTOINASE"/>
    <property type="match status" value="1"/>
</dbReference>
<dbReference type="PANTHER" id="PTHR43668:SF2">
    <property type="entry name" value="ALLANTOINASE"/>
    <property type="match status" value="1"/>
</dbReference>
<dbReference type="Pfam" id="PF01979">
    <property type="entry name" value="Amidohydro_1"/>
    <property type="match status" value="1"/>
</dbReference>
<dbReference type="SUPFAM" id="SSF51338">
    <property type="entry name" value="Composite domain of metallo-dependent hydrolases"/>
    <property type="match status" value="1"/>
</dbReference>
<dbReference type="SUPFAM" id="SSF51556">
    <property type="entry name" value="Metallo-dependent hydrolases"/>
    <property type="match status" value="1"/>
</dbReference>
<dbReference type="PROSITE" id="PS00483">
    <property type="entry name" value="DIHYDROOROTASE_2"/>
    <property type="match status" value="1"/>
</dbReference>
<organism>
    <name type="scientific">Deinococcus radiodurans (strain ATCC 13939 / DSM 20539 / JCM 16871 / CCUG 27074 / LMG 4051 / NBRC 15346 / NCIMB 9279 / VKM B-1422 / R1)</name>
    <dbReference type="NCBI Taxonomy" id="243230"/>
    <lineage>
        <taxon>Bacteria</taxon>
        <taxon>Thermotogati</taxon>
        <taxon>Deinococcota</taxon>
        <taxon>Deinococci</taxon>
        <taxon>Deinococcales</taxon>
        <taxon>Deinococcaceae</taxon>
        <taxon>Deinococcus</taxon>
    </lineage>
</organism>
<accession>Q9RVC3</accession>
<keyword id="KW-0378">Hydrolase</keyword>
<keyword id="KW-0479">Metal-binding</keyword>
<keyword id="KW-0665">Pyrimidine biosynthesis</keyword>
<keyword id="KW-1185">Reference proteome</keyword>
<keyword id="KW-0862">Zinc</keyword>
<reference key="1">
    <citation type="journal article" date="1999" name="Science">
        <title>Genome sequence of the radioresistant bacterium Deinococcus radiodurans R1.</title>
        <authorList>
            <person name="White O."/>
            <person name="Eisen J.A."/>
            <person name="Heidelberg J.F."/>
            <person name="Hickey E.K."/>
            <person name="Peterson J.D."/>
            <person name="Dodson R.J."/>
            <person name="Haft D.H."/>
            <person name="Gwinn M.L."/>
            <person name="Nelson W.C."/>
            <person name="Richardson D.L."/>
            <person name="Moffat K.S."/>
            <person name="Qin H."/>
            <person name="Jiang L."/>
            <person name="Pamphile W."/>
            <person name="Crosby M."/>
            <person name="Shen M."/>
            <person name="Vamathevan J.J."/>
            <person name="Lam P."/>
            <person name="McDonald L.A."/>
            <person name="Utterback T.R."/>
            <person name="Zalewski C."/>
            <person name="Makarova K.S."/>
            <person name="Aravind L."/>
            <person name="Daly M.J."/>
            <person name="Minton K.W."/>
            <person name="Fleischmann R.D."/>
            <person name="Ketchum K.A."/>
            <person name="Nelson K.E."/>
            <person name="Salzberg S.L."/>
            <person name="Smith H.O."/>
            <person name="Venter J.C."/>
            <person name="Fraser C.M."/>
        </authorList>
    </citation>
    <scope>NUCLEOTIDE SEQUENCE [LARGE SCALE GENOMIC DNA]</scope>
    <source>
        <strain>ATCC 13939 / DSM 20539 / JCM 16871 / CCUG 27074 / LMG 4051 / NBRC 15346 / NCIMB 9279 / VKM B-1422 / R1</strain>
    </source>
</reference>
<comment type="function">
    <text evidence="1">Catalyzes the reversible cyclization of carbamoyl aspartate to dihydroorotate.</text>
</comment>
<comment type="catalytic activity">
    <reaction evidence="1">
        <text>(S)-dihydroorotate + H2O = N-carbamoyl-L-aspartate + H(+)</text>
        <dbReference type="Rhea" id="RHEA:24296"/>
        <dbReference type="ChEBI" id="CHEBI:15377"/>
        <dbReference type="ChEBI" id="CHEBI:15378"/>
        <dbReference type="ChEBI" id="CHEBI:30864"/>
        <dbReference type="ChEBI" id="CHEBI:32814"/>
        <dbReference type="EC" id="3.5.2.3"/>
    </reaction>
</comment>
<comment type="cofactor">
    <cofactor evidence="1">
        <name>Zn(2+)</name>
        <dbReference type="ChEBI" id="CHEBI:29105"/>
    </cofactor>
    <text evidence="1">Binds 2 Zn(2+) ions per subunit.</text>
</comment>
<comment type="pathway">
    <text evidence="1">Pyrimidine metabolism; UMP biosynthesis via de novo pathway; (S)-dihydroorotate from bicarbonate: step 3/3.</text>
</comment>
<comment type="similarity">
    <text evidence="1">Belongs to the metallo-dependent hydrolases superfamily. DHOase family. Class I DHOase subfamily.</text>
</comment>
<proteinExistence type="inferred from homology"/>
<gene>
    <name evidence="1" type="primary">pyrC</name>
    <name type="ordered locus">DR_1106</name>
</gene>
<feature type="chain" id="PRO_0000147233" description="Dihydroorotase">
    <location>
        <begin position="1"/>
        <end position="416"/>
    </location>
</feature>
<feature type="active site" evidence="1">
    <location>
        <position position="298"/>
    </location>
</feature>
<feature type="binding site" evidence="1">
    <location>
        <position position="53"/>
    </location>
    <ligand>
        <name>Zn(2+)</name>
        <dbReference type="ChEBI" id="CHEBI:29105"/>
        <label>1</label>
    </ligand>
</feature>
<feature type="binding site" evidence="1">
    <location>
        <begin position="55"/>
        <end position="57"/>
    </location>
    <ligand>
        <name>substrate</name>
    </ligand>
</feature>
<feature type="binding site" evidence="1">
    <location>
        <position position="55"/>
    </location>
    <ligand>
        <name>Zn(2+)</name>
        <dbReference type="ChEBI" id="CHEBI:29105"/>
        <label>1</label>
    </ligand>
</feature>
<feature type="binding site" evidence="1">
    <location>
        <position position="87"/>
    </location>
    <ligand>
        <name>substrate</name>
    </ligand>
</feature>
<feature type="binding site" evidence="1">
    <location>
        <position position="145"/>
    </location>
    <ligand>
        <name>Zn(2+)</name>
        <dbReference type="ChEBI" id="CHEBI:29105"/>
        <label>1</label>
    </ligand>
</feature>
<feature type="binding site" evidence="1">
    <location>
        <position position="145"/>
    </location>
    <ligand>
        <name>Zn(2+)</name>
        <dbReference type="ChEBI" id="CHEBI:29105"/>
        <label>2</label>
    </ligand>
</feature>
<feature type="binding site" evidence="1">
    <location>
        <position position="172"/>
    </location>
    <ligand>
        <name>Zn(2+)</name>
        <dbReference type="ChEBI" id="CHEBI:29105"/>
        <label>2</label>
    </ligand>
</feature>
<feature type="binding site" evidence="1">
    <location>
        <position position="225"/>
    </location>
    <ligand>
        <name>Zn(2+)</name>
        <dbReference type="ChEBI" id="CHEBI:29105"/>
        <label>2</label>
    </ligand>
</feature>
<feature type="binding site" evidence="1">
    <location>
        <position position="298"/>
    </location>
    <ligand>
        <name>Zn(2+)</name>
        <dbReference type="ChEBI" id="CHEBI:29105"/>
        <label>1</label>
    </ligand>
</feature>
<feature type="binding site" evidence="1">
    <location>
        <position position="302"/>
    </location>
    <ligand>
        <name>substrate</name>
    </ligand>
</feature>